<sequence length="152" mass="17460">MIYYLIALFVIAIDQLSKWFIVKNMELGASIPIIDNVLYITSHRNRGAAWGILENKMWFFYIITVVFVGFIVFYMKKYAKTDKLLGISLGLILGGAIGNFIDRVFRQEVVDFIHVYIFSYNYPVFNIADSALCIGVVLIIIQTLLEGKKMKE</sequence>
<keyword id="KW-0064">Aspartyl protease</keyword>
<keyword id="KW-1003">Cell membrane</keyword>
<keyword id="KW-0378">Hydrolase</keyword>
<keyword id="KW-0472">Membrane</keyword>
<keyword id="KW-0645">Protease</keyword>
<keyword id="KW-0812">Transmembrane</keyword>
<keyword id="KW-1133">Transmembrane helix</keyword>
<comment type="function">
    <text evidence="1">This protein specifically catalyzes the removal of signal peptides from prolipoproteins.</text>
</comment>
<comment type="catalytic activity">
    <reaction evidence="1">
        <text>Release of signal peptides from bacterial membrane prolipoproteins. Hydrolyzes -Xaa-Yaa-Zaa-|-(S,diacylglyceryl)Cys-, in which Xaa is hydrophobic (preferably Leu), and Yaa (Ala or Ser) and Zaa (Gly or Ala) have small, neutral side chains.</text>
        <dbReference type="EC" id="3.4.23.36"/>
    </reaction>
</comment>
<comment type="pathway">
    <text evidence="1">Protein modification; lipoprotein biosynthesis (signal peptide cleavage).</text>
</comment>
<comment type="subcellular location">
    <subcellularLocation>
        <location evidence="1">Cell membrane</location>
        <topology evidence="1">Multi-pass membrane protein</topology>
    </subcellularLocation>
</comment>
<comment type="similarity">
    <text evidence="1">Belongs to the peptidase A8 family.</text>
</comment>
<protein>
    <recommendedName>
        <fullName evidence="1">Lipoprotein signal peptidase</fullName>
        <ecNumber evidence="1">3.4.23.36</ecNumber>
    </recommendedName>
    <alternativeName>
        <fullName evidence="1">Prolipoprotein signal peptidase</fullName>
    </alternativeName>
    <alternativeName>
        <fullName evidence="1">Signal peptidase II</fullName>
        <shortName evidence="1">SPase II</shortName>
    </alternativeName>
</protein>
<reference key="1">
    <citation type="journal article" date="2008" name="Chem. Biol. Interact.">
        <title>Extending the Bacillus cereus group genomics to putative food-borne pathogens of different toxicity.</title>
        <authorList>
            <person name="Lapidus A."/>
            <person name="Goltsman E."/>
            <person name="Auger S."/>
            <person name="Galleron N."/>
            <person name="Segurens B."/>
            <person name="Dossat C."/>
            <person name="Land M.L."/>
            <person name="Broussolle V."/>
            <person name="Brillard J."/>
            <person name="Guinebretiere M.-H."/>
            <person name="Sanchis V."/>
            <person name="Nguen-the C."/>
            <person name="Lereclus D."/>
            <person name="Richardson P."/>
            <person name="Wincker P."/>
            <person name="Weissenbach J."/>
            <person name="Ehrlich S.D."/>
            <person name="Sorokin A."/>
        </authorList>
    </citation>
    <scope>NUCLEOTIDE SEQUENCE [LARGE SCALE GENOMIC DNA]</scope>
    <source>
        <strain>DSM 22905 / CIP 110041 / 391-98 / NVH 391-98</strain>
    </source>
</reference>
<name>LSPA_BACCN</name>
<dbReference type="EC" id="3.4.23.36" evidence="1"/>
<dbReference type="EMBL" id="CP000764">
    <property type="protein sequence ID" value="ABS22776.1"/>
    <property type="molecule type" value="Genomic_DNA"/>
</dbReference>
<dbReference type="RefSeq" id="WP_012094983.1">
    <property type="nucleotide sequence ID" value="NC_009674.1"/>
</dbReference>
<dbReference type="SMR" id="A7GRL8"/>
<dbReference type="STRING" id="315749.Bcer98_2542"/>
<dbReference type="GeneID" id="33897796"/>
<dbReference type="KEGG" id="bcy:Bcer98_2542"/>
<dbReference type="eggNOG" id="COG0597">
    <property type="taxonomic scope" value="Bacteria"/>
</dbReference>
<dbReference type="HOGENOM" id="CLU_083252_3_0_9"/>
<dbReference type="OrthoDB" id="9810259at2"/>
<dbReference type="UniPathway" id="UPA00665"/>
<dbReference type="Proteomes" id="UP000002300">
    <property type="component" value="Chromosome"/>
</dbReference>
<dbReference type="GO" id="GO:0005886">
    <property type="term" value="C:plasma membrane"/>
    <property type="evidence" value="ECO:0007669"/>
    <property type="project" value="UniProtKB-SubCell"/>
</dbReference>
<dbReference type="GO" id="GO:0004190">
    <property type="term" value="F:aspartic-type endopeptidase activity"/>
    <property type="evidence" value="ECO:0007669"/>
    <property type="project" value="UniProtKB-UniRule"/>
</dbReference>
<dbReference type="GO" id="GO:0006508">
    <property type="term" value="P:proteolysis"/>
    <property type="evidence" value="ECO:0007669"/>
    <property type="project" value="UniProtKB-KW"/>
</dbReference>
<dbReference type="HAMAP" id="MF_00161">
    <property type="entry name" value="LspA"/>
    <property type="match status" value="1"/>
</dbReference>
<dbReference type="InterPro" id="IPR001872">
    <property type="entry name" value="Peptidase_A8"/>
</dbReference>
<dbReference type="NCBIfam" id="TIGR00077">
    <property type="entry name" value="lspA"/>
    <property type="match status" value="1"/>
</dbReference>
<dbReference type="PANTHER" id="PTHR33695">
    <property type="entry name" value="LIPOPROTEIN SIGNAL PEPTIDASE"/>
    <property type="match status" value="1"/>
</dbReference>
<dbReference type="PANTHER" id="PTHR33695:SF1">
    <property type="entry name" value="LIPOPROTEIN SIGNAL PEPTIDASE"/>
    <property type="match status" value="1"/>
</dbReference>
<dbReference type="Pfam" id="PF01252">
    <property type="entry name" value="Peptidase_A8"/>
    <property type="match status" value="1"/>
</dbReference>
<dbReference type="PRINTS" id="PR00781">
    <property type="entry name" value="LIPOSIGPTASE"/>
</dbReference>
<dbReference type="PROSITE" id="PS00855">
    <property type="entry name" value="SPASE_II"/>
    <property type="match status" value="1"/>
</dbReference>
<accession>A7GRL8</accession>
<feature type="chain" id="PRO_1000190792" description="Lipoprotein signal peptidase">
    <location>
        <begin position="1"/>
        <end position="152"/>
    </location>
</feature>
<feature type="transmembrane region" description="Helical" evidence="1">
    <location>
        <begin position="55"/>
        <end position="75"/>
    </location>
</feature>
<feature type="transmembrane region" description="Helical" evidence="1">
    <location>
        <begin position="85"/>
        <end position="105"/>
    </location>
</feature>
<feature type="transmembrane region" description="Helical" evidence="1">
    <location>
        <begin position="124"/>
        <end position="144"/>
    </location>
</feature>
<feature type="active site" evidence="1">
    <location>
        <position position="111"/>
    </location>
</feature>
<feature type="active site" evidence="1">
    <location>
        <position position="129"/>
    </location>
</feature>
<evidence type="ECO:0000255" key="1">
    <source>
        <dbReference type="HAMAP-Rule" id="MF_00161"/>
    </source>
</evidence>
<gene>
    <name evidence="1" type="primary">lspA</name>
    <name type="ordered locus">Bcer98_2542</name>
</gene>
<organism>
    <name type="scientific">Bacillus cytotoxicus (strain DSM 22905 / CIP 110041 / 391-98 / NVH 391-98)</name>
    <dbReference type="NCBI Taxonomy" id="315749"/>
    <lineage>
        <taxon>Bacteria</taxon>
        <taxon>Bacillati</taxon>
        <taxon>Bacillota</taxon>
        <taxon>Bacilli</taxon>
        <taxon>Bacillales</taxon>
        <taxon>Bacillaceae</taxon>
        <taxon>Bacillus</taxon>
        <taxon>Bacillus cereus group</taxon>
    </lineage>
</organism>
<proteinExistence type="inferred from homology"/>